<gene>
    <name evidence="1" type="primary">smc</name>
    <name type="ordered locus">PF1843</name>
</gene>
<accession>Q8TZY2</accession>
<accession>Q877I1</accession>
<organism>
    <name type="scientific">Pyrococcus furiosus (strain ATCC 43587 / DSM 3638 / JCM 8422 / Vc1)</name>
    <dbReference type="NCBI Taxonomy" id="186497"/>
    <lineage>
        <taxon>Archaea</taxon>
        <taxon>Methanobacteriati</taxon>
        <taxon>Methanobacteriota</taxon>
        <taxon>Thermococci</taxon>
        <taxon>Thermococcales</taxon>
        <taxon>Thermococcaceae</taxon>
        <taxon>Pyrococcus</taxon>
    </lineage>
</organism>
<feature type="chain" id="PRO_0000409287" description="Chromosome partition protein Smc">
    <location>
        <begin position="1"/>
        <end position="1177"/>
    </location>
</feature>
<feature type="domain" description="SMC hinge">
    <location>
        <begin position="521"/>
        <end position="627"/>
    </location>
</feature>
<feature type="coiled-coil region" evidence="1">
    <location>
        <begin position="167"/>
        <end position="506"/>
    </location>
</feature>
<feature type="coiled-coil region" evidence="1">
    <location>
        <begin position="659"/>
        <end position="1012"/>
    </location>
</feature>
<feature type="binding site" evidence="1 2">
    <location>
        <begin position="34"/>
        <end position="41"/>
    </location>
    <ligand>
        <name>ATP</name>
        <dbReference type="ChEBI" id="CHEBI:30616"/>
    </ligand>
</feature>
<feature type="strand" evidence="6">
    <location>
        <begin position="3"/>
        <end position="12"/>
    </location>
</feature>
<feature type="helix" evidence="6">
    <location>
        <begin position="13"/>
        <end position="15"/>
    </location>
</feature>
<feature type="strand" evidence="6">
    <location>
        <begin position="20"/>
        <end position="23"/>
    </location>
</feature>
<feature type="strand" evidence="6">
    <location>
        <begin position="26"/>
        <end position="33"/>
    </location>
</feature>
<feature type="helix" evidence="6">
    <location>
        <begin position="39"/>
        <end position="49"/>
    </location>
</feature>
<feature type="helix" evidence="6">
    <location>
        <begin position="56"/>
        <end position="58"/>
    </location>
</feature>
<feature type="helix" evidence="6">
    <location>
        <begin position="63"/>
        <end position="66"/>
    </location>
</feature>
<feature type="strand" evidence="6">
    <location>
        <begin position="80"/>
        <end position="87"/>
    </location>
</feature>
<feature type="strand" evidence="6">
    <location>
        <begin position="93"/>
        <end position="106"/>
    </location>
</feature>
<feature type="strand" evidence="6">
    <location>
        <begin position="112"/>
        <end position="116"/>
    </location>
</feature>
<feature type="strand" evidence="6">
    <location>
        <begin position="119"/>
        <end position="121"/>
    </location>
</feature>
<feature type="helix" evidence="6">
    <location>
        <begin position="123"/>
        <end position="132"/>
    </location>
</feature>
<feature type="helix" evidence="5">
    <location>
        <begin position="137"/>
        <end position="139"/>
    </location>
</feature>
<feature type="helix" evidence="6">
    <location>
        <begin position="150"/>
        <end position="153"/>
    </location>
</feature>
<feature type="helix" evidence="6">
    <location>
        <begin position="156"/>
        <end position="167"/>
    </location>
</feature>
<feature type="helix" evidence="9">
    <location>
        <begin position="170"/>
        <end position="200"/>
    </location>
</feature>
<feature type="helix" evidence="9">
    <location>
        <begin position="210"/>
        <end position="226"/>
    </location>
</feature>
<feature type="helix" evidence="9">
    <location>
        <begin position="232"/>
        <end position="253"/>
    </location>
</feature>
<feature type="helix" evidence="9">
    <location>
        <begin position="257"/>
        <end position="275"/>
    </location>
</feature>
<feature type="strand" evidence="9">
    <location>
        <begin position="276"/>
        <end position="283"/>
    </location>
</feature>
<feature type="strand" evidence="9">
    <location>
        <begin position="285"/>
        <end position="287"/>
    </location>
</feature>
<feature type="strand" evidence="9">
    <location>
        <begin position="292"/>
        <end position="295"/>
    </location>
</feature>
<feature type="helix" evidence="9">
    <location>
        <begin position="307"/>
        <end position="309"/>
    </location>
</feature>
<feature type="helix" evidence="9">
    <location>
        <begin position="315"/>
        <end position="324"/>
    </location>
</feature>
<feature type="helix" evidence="9">
    <location>
        <begin position="326"/>
        <end position="331"/>
    </location>
</feature>
<feature type="strand" evidence="9">
    <location>
        <begin position="335"/>
        <end position="341"/>
    </location>
</feature>
<feature type="turn" evidence="9">
    <location>
        <begin position="342"/>
        <end position="345"/>
    </location>
</feature>
<feature type="helix" evidence="9">
    <location>
        <begin position="353"/>
        <end position="362"/>
    </location>
</feature>
<feature type="turn" evidence="9">
    <location>
        <begin position="365"/>
        <end position="367"/>
    </location>
</feature>
<feature type="strand" evidence="9">
    <location>
        <begin position="368"/>
        <end position="373"/>
    </location>
</feature>
<feature type="strand" evidence="9">
    <location>
        <begin position="381"/>
        <end position="389"/>
    </location>
</feature>
<feature type="strand" evidence="9">
    <location>
        <begin position="395"/>
        <end position="401"/>
    </location>
</feature>
<feature type="helix" evidence="9">
    <location>
        <begin position="402"/>
        <end position="412"/>
    </location>
</feature>
<feature type="helix" evidence="7">
    <location>
        <begin position="490"/>
        <end position="505"/>
    </location>
</feature>
<feature type="helix" evidence="7">
    <location>
        <begin position="510"/>
        <end position="514"/>
    </location>
</feature>
<feature type="strand" evidence="7">
    <location>
        <begin position="521"/>
        <end position="525"/>
    </location>
</feature>
<feature type="helix" evidence="7">
    <location>
        <begin position="526"/>
        <end position="529"/>
    </location>
</feature>
<feature type="strand" evidence="7">
    <location>
        <begin position="531"/>
        <end position="533"/>
    </location>
</feature>
<feature type="helix" evidence="7">
    <location>
        <begin position="535"/>
        <end position="537"/>
    </location>
</feature>
<feature type="helix" evidence="7">
    <location>
        <begin position="538"/>
        <end position="545"/>
    </location>
</feature>
<feature type="helix" evidence="7">
    <location>
        <begin position="546"/>
        <end position="550"/>
    </location>
</feature>
<feature type="strand" evidence="7">
    <location>
        <begin position="552"/>
        <end position="556"/>
    </location>
</feature>
<feature type="helix" evidence="7">
    <location>
        <begin position="557"/>
        <end position="569"/>
    </location>
</feature>
<feature type="strand" evidence="7">
    <location>
        <begin position="577"/>
        <end position="579"/>
    </location>
</feature>
<feature type="turn" evidence="7">
    <location>
        <begin position="580"/>
        <end position="582"/>
    </location>
</feature>
<feature type="strand" evidence="7">
    <location>
        <begin position="592"/>
        <end position="595"/>
    </location>
</feature>
<feature type="helix" evidence="7">
    <location>
        <begin position="596"/>
        <end position="599"/>
    </location>
</feature>
<feature type="helix" evidence="7">
    <location>
        <begin position="604"/>
        <end position="606"/>
    </location>
</feature>
<feature type="helix" evidence="7">
    <location>
        <begin position="607"/>
        <end position="614"/>
    </location>
</feature>
<feature type="strand" evidence="7">
    <location>
        <begin position="617"/>
        <end position="621"/>
    </location>
</feature>
<feature type="helix" evidence="7">
    <location>
        <begin position="624"/>
        <end position="629"/>
    </location>
</feature>
<feature type="turn" evidence="7">
    <location>
        <begin position="630"/>
        <end position="632"/>
    </location>
</feature>
<feature type="strand" evidence="7">
    <location>
        <begin position="633"/>
        <end position="637"/>
    </location>
</feature>
<feature type="turn" evidence="8">
    <location>
        <begin position="638"/>
        <end position="640"/>
    </location>
</feature>
<feature type="strand" evidence="8">
    <location>
        <begin position="649"/>
        <end position="651"/>
    </location>
</feature>
<feature type="strand" evidence="7">
    <location>
        <begin position="659"/>
        <end position="661"/>
    </location>
</feature>
<feature type="helix" evidence="8">
    <location>
        <begin position="663"/>
        <end position="713"/>
    </location>
</feature>
<feature type="turn" evidence="8">
    <location>
        <begin position="714"/>
        <end position="716"/>
    </location>
</feature>
<feature type="helix" evidence="6">
    <location>
        <begin position="1008"/>
        <end position="1031"/>
    </location>
</feature>
<feature type="strand" evidence="6">
    <location>
        <begin position="1036"/>
        <end position="1042"/>
    </location>
</feature>
<feature type="strand" evidence="6">
    <location>
        <begin position="1044"/>
        <end position="1046"/>
    </location>
</feature>
<feature type="helix" evidence="6">
    <location>
        <begin position="1047"/>
        <end position="1049"/>
    </location>
</feature>
<feature type="strand" evidence="6">
    <location>
        <begin position="1052"/>
        <end position="1057"/>
    </location>
</feature>
<feature type="strand" evidence="6">
    <location>
        <begin position="1060"/>
        <end position="1062"/>
    </location>
</feature>
<feature type="helix" evidence="6">
    <location>
        <begin position="1066"/>
        <end position="1068"/>
    </location>
</feature>
<feature type="helix" evidence="6">
    <location>
        <begin position="1071"/>
        <end position="1088"/>
    </location>
</feature>
<feature type="strand" evidence="6">
    <location>
        <begin position="1092"/>
        <end position="1098"/>
    </location>
</feature>
<feature type="turn" evidence="6">
    <location>
        <begin position="1099"/>
        <end position="1102"/>
    </location>
</feature>
<feature type="helix" evidence="6">
    <location>
        <begin position="1105"/>
        <end position="1118"/>
    </location>
</feature>
<feature type="turn" evidence="6">
    <location>
        <begin position="1119"/>
        <end position="1121"/>
    </location>
</feature>
<feature type="strand" evidence="6">
    <location>
        <begin position="1122"/>
        <end position="1127"/>
    </location>
</feature>
<feature type="helix" evidence="6">
    <location>
        <begin position="1131"/>
        <end position="1134"/>
    </location>
</feature>
<feature type="strand" evidence="6">
    <location>
        <begin position="1138"/>
        <end position="1146"/>
    </location>
</feature>
<feature type="strand" evidence="6">
    <location>
        <begin position="1149"/>
        <end position="1154"/>
    </location>
</feature>
<feature type="helix" evidence="6">
    <location>
        <begin position="1157"/>
        <end position="1168"/>
    </location>
</feature>
<reference key="1">
    <citation type="journal article" date="2004" name="Mol. Biol. Evol.">
        <title>The evolution of SMC proteins: phylogenetic analysis and structural implications.</title>
        <authorList>
            <person name="Cobbe N."/>
            <person name="Heck M.M.S."/>
        </authorList>
    </citation>
    <scope>NUCLEOTIDE SEQUENCE [GENOMIC DNA]</scope>
</reference>
<reference key="2">
    <citation type="journal article" date="1999" name="Genetics">
        <title>Divergence of the hyperthermophilic archaea Pyrococcus furiosus and P. horikoshii inferred from complete genomic sequences.</title>
        <authorList>
            <person name="Maeder D.L."/>
            <person name="Weiss R.B."/>
            <person name="Dunn D.M."/>
            <person name="Cherry J.L."/>
            <person name="Gonzalez J.M."/>
            <person name="DiRuggiero J."/>
            <person name="Robb F.T."/>
        </authorList>
    </citation>
    <scope>NUCLEOTIDE SEQUENCE [LARGE SCALE GENOMIC DNA]</scope>
    <source>
        <strain>ATCC 43587 / DSM 3638 / JCM 8422 / Vc1</strain>
    </source>
</reference>
<reference key="3">
    <citation type="journal article" date="2004" name="Curr. Biol.">
        <title>Structural biochemistry of ATP-driven dimerization and DNA-stimulated activation of SMC ATPases.</title>
        <authorList>
            <person name="Lammens A."/>
            <person name="Schele A."/>
            <person name="Hopfner K.P."/>
        </authorList>
    </citation>
    <scope>X-RAY CRYSTALLOGRAPHY (2.00 ANGSTROMS) OF 1-182 AND 1006-1177 IN COMPLEX WITH ATP</scope>
    <scope>DOMAIN</scope>
</reference>
<reference key="4">
    <citation type="journal article" date="2010" name="J. Mol. Biol.">
        <title>Structural basis for adenylate kinase activity in ABC ATPases.</title>
        <authorList>
            <person name="Lammens A."/>
            <person name="Hopfner K.P."/>
        </authorList>
    </citation>
    <scope>X-RAY CRYSTALLOGRAPHY (1.63 ANGSTROMS) OF 1-182 AND 1006-1177</scope>
</reference>
<reference key="5">
    <citation type="journal article" date="2011" name="Proteins">
        <title>Structure and DNA-binding activity of the Pyrococcus furiosus SMC protein hinge domain.</title>
        <authorList>
            <person name="Griese J.J."/>
            <person name="Hopfner K.P."/>
        </authorList>
    </citation>
    <scope>X-RAY CRYSTALLOGRAPHY (1.7 ANGSTROMS) OF 488-667</scope>
    <scope>DNA-BINDING</scope>
    <scope>SUBUNIT</scope>
    <scope>DOMAIN</scope>
</reference>
<evidence type="ECO:0000255" key="1">
    <source>
        <dbReference type="HAMAP-Rule" id="MF_01894"/>
    </source>
</evidence>
<evidence type="ECO:0000269" key="2">
    <source>
    </source>
</evidence>
<evidence type="ECO:0000269" key="3">
    <source>
    </source>
</evidence>
<evidence type="ECO:0000305" key="4"/>
<evidence type="ECO:0007829" key="5">
    <source>
        <dbReference type="PDB" id="1XEX"/>
    </source>
</evidence>
<evidence type="ECO:0007829" key="6">
    <source>
        <dbReference type="PDB" id="3KTA"/>
    </source>
</evidence>
<evidence type="ECO:0007829" key="7">
    <source>
        <dbReference type="PDB" id="3NWC"/>
    </source>
</evidence>
<evidence type="ECO:0007829" key="8">
    <source>
        <dbReference type="PDB" id="4RSJ"/>
    </source>
</evidence>
<evidence type="ECO:0007829" key="9">
    <source>
        <dbReference type="PDB" id="5XNS"/>
    </source>
</evidence>
<protein>
    <recommendedName>
        <fullName evidence="1">Chromosome partition protein Smc</fullName>
    </recommendedName>
</protein>
<keyword id="KW-0002">3D-structure</keyword>
<keyword id="KW-0067">ATP-binding</keyword>
<keyword id="KW-0175">Coiled coil</keyword>
<keyword id="KW-0963">Cytoplasm</keyword>
<keyword id="KW-0238">DNA-binding</keyword>
<keyword id="KW-0547">Nucleotide-binding</keyword>
<keyword id="KW-1185">Reference proteome</keyword>
<proteinExistence type="evidence at protein level"/>
<name>SMC_PYRFU</name>
<comment type="function">
    <text evidence="1">Required for chromosome condensation and partitioning (By similarity). Binds single-stranded but not double-stranded DNA.</text>
</comment>
<comment type="subunit">
    <text evidence="1 2 3">Homodimer.</text>
</comment>
<comment type="interaction">
    <interactant intactId="EBI-2505615">
        <id>Q8TZY2</id>
    </interactant>
    <interactant intactId="EBI-16033344">
        <id>Q8TZY3</id>
        <label>PF1842</label>
    </interactant>
    <organismsDiffer>false</organismsDiffer>
    <experiments>3</experiments>
</comment>
<comment type="subcellular location">
    <subcellularLocation>
        <location evidence="1">Cytoplasm</location>
    </subcellularLocation>
</comment>
<comment type="domain">
    <text evidence="1 2 3">Contains large globular domains required for ATP hydrolysis at each terminus and a third globular domain forming a flexible SMC hinge near the middle of the molecule. These domains are separated by coiled-coil structures. The N- and C-terminus interact to make up an ATP-binding cassette-type ATPase domain. The SMC hinge domain mediates dimerization and binds DNA.</text>
</comment>
<comment type="similarity">
    <text evidence="1">Belongs to the SMC family.</text>
</comment>
<comment type="sequence caution" evidence="4">
    <conflict type="erroneous initiation">
        <sequence resource="EMBL-CDS" id="AAL81967"/>
    </conflict>
    <text>Extended N-terminus.</text>
</comment>
<dbReference type="EMBL" id="AJ543649">
    <property type="protein sequence ID" value="CAD66602.1"/>
    <property type="molecule type" value="Genomic_DNA"/>
</dbReference>
<dbReference type="EMBL" id="AE009950">
    <property type="protein sequence ID" value="AAL81967.1"/>
    <property type="status" value="ALT_INIT"/>
    <property type="molecule type" value="Genomic_DNA"/>
</dbReference>
<dbReference type="RefSeq" id="WP_014835559.1">
    <property type="nucleotide sequence ID" value="NZ_CP023154.1"/>
</dbReference>
<dbReference type="PDB" id="1XEW">
    <property type="method" value="X-ray"/>
    <property type="resolution" value="2.00 A"/>
    <property type="chains" value="X=1-182, Y=1006-1177"/>
</dbReference>
<dbReference type="PDB" id="1XEX">
    <property type="method" value="X-ray"/>
    <property type="resolution" value="2.50 A"/>
    <property type="chains" value="A=1-182"/>
</dbReference>
<dbReference type="PDB" id="3KTA">
    <property type="method" value="X-ray"/>
    <property type="resolution" value="1.63 A"/>
    <property type="chains" value="A/C=1-182, B/D=1006-1177"/>
</dbReference>
<dbReference type="PDB" id="3NWC">
    <property type="method" value="X-ray"/>
    <property type="resolution" value="1.70 A"/>
    <property type="chains" value="A/B=488-667"/>
</dbReference>
<dbReference type="PDB" id="4I99">
    <property type="method" value="X-ray"/>
    <property type="resolution" value="2.30 A"/>
    <property type="chains" value="A/B=1-1172"/>
</dbReference>
<dbReference type="PDB" id="4RSJ">
    <property type="method" value="X-ray"/>
    <property type="resolution" value="3.50 A"/>
    <property type="chains" value="A/B/C/D=445-720"/>
</dbReference>
<dbReference type="PDB" id="5XNS">
    <property type="method" value="X-ray"/>
    <property type="resolution" value="2.01 A"/>
    <property type="chains" value="A=1-201, A=973-1169"/>
</dbReference>
<dbReference type="PDBsum" id="1XEW"/>
<dbReference type="PDBsum" id="1XEX"/>
<dbReference type="PDBsum" id="3KTA"/>
<dbReference type="PDBsum" id="3NWC"/>
<dbReference type="PDBsum" id="4I99"/>
<dbReference type="PDBsum" id="4RSJ"/>
<dbReference type="PDBsum" id="5XNS"/>
<dbReference type="SMR" id="Q8TZY2"/>
<dbReference type="DIP" id="DIP-54374N"/>
<dbReference type="IntAct" id="Q8TZY2">
    <property type="interactions" value="3"/>
</dbReference>
<dbReference type="STRING" id="186497.PF1843"/>
<dbReference type="PaxDb" id="186497-PF1843"/>
<dbReference type="GeneID" id="41713663"/>
<dbReference type="KEGG" id="pfu:PF1843"/>
<dbReference type="PATRIC" id="fig|186497.12.peg.1914"/>
<dbReference type="eggNOG" id="arCOG00371">
    <property type="taxonomic scope" value="Archaea"/>
</dbReference>
<dbReference type="HOGENOM" id="CLU_001042_2_2_2"/>
<dbReference type="OrthoDB" id="9143at2157"/>
<dbReference type="BRENDA" id="2.7.4.3">
    <property type="organism ID" value="5243"/>
</dbReference>
<dbReference type="EvolutionaryTrace" id="Q8TZY2"/>
<dbReference type="Proteomes" id="UP000001013">
    <property type="component" value="Chromosome"/>
</dbReference>
<dbReference type="GO" id="GO:0005694">
    <property type="term" value="C:chromosome"/>
    <property type="evidence" value="ECO:0007669"/>
    <property type="project" value="InterPro"/>
</dbReference>
<dbReference type="GO" id="GO:0005737">
    <property type="term" value="C:cytoplasm"/>
    <property type="evidence" value="ECO:0007669"/>
    <property type="project" value="UniProtKB-SubCell"/>
</dbReference>
<dbReference type="GO" id="GO:0005524">
    <property type="term" value="F:ATP binding"/>
    <property type="evidence" value="ECO:0007669"/>
    <property type="project" value="UniProtKB-UniRule"/>
</dbReference>
<dbReference type="GO" id="GO:0016887">
    <property type="term" value="F:ATP hydrolysis activity"/>
    <property type="evidence" value="ECO:0007669"/>
    <property type="project" value="InterPro"/>
</dbReference>
<dbReference type="GO" id="GO:0003677">
    <property type="term" value="F:DNA binding"/>
    <property type="evidence" value="ECO:0007669"/>
    <property type="project" value="UniProtKB-UniRule"/>
</dbReference>
<dbReference type="GO" id="GO:0030261">
    <property type="term" value="P:chromosome condensation"/>
    <property type="evidence" value="ECO:0007669"/>
    <property type="project" value="InterPro"/>
</dbReference>
<dbReference type="GO" id="GO:0007059">
    <property type="term" value="P:chromosome segregation"/>
    <property type="evidence" value="ECO:0007669"/>
    <property type="project" value="UniProtKB-UniRule"/>
</dbReference>
<dbReference type="GO" id="GO:0006260">
    <property type="term" value="P:DNA replication"/>
    <property type="evidence" value="ECO:0007669"/>
    <property type="project" value="UniProtKB-UniRule"/>
</dbReference>
<dbReference type="GO" id="GO:0007062">
    <property type="term" value="P:sister chromatid cohesion"/>
    <property type="evidence" value="ECO:0007669"/>
    <property type="project" value="InterPro"/>
</dbReference>
<dbReference type="Gene3D" id="1.10.287.1490">
    <property type="match status" value="1"/>
</dbReference>
<dbReference type="Gene3D" id="1.20.1060.20">
    <property type="match status" value="1"/>
</dbReference>
<dbReference type="Gene3D" id="3.30.70.1620">
    <property type="match status" value="1"/>
</dbReference>
<dbReference type="Gene3D" id="3.40.50.300">
    <property type="entry name" value="P-loop containing nucleotide triphosphate hydrolases"/>
    <property type="match status" value="2"/>
</dbReference>
<dbReference type="HAMAP" id="MF_01894">
    <property type="entry name" value="Smc_prok"/>
    <property type="match status" value="1"/>
</dbReference>
<dbReference type="InterPro" id="IPR027417">
    <property type="entry name" value="P-loop_NTPase"/>
</dbReference>
<dbReference type="InterPro" id="IPR003395">
    <property type="entry name" value="RecF/RecN/SMC_N"/>
</dbReference>
<dbReference type="InterPro" id="IPR024704">
    <property type="entry name" value="SMC"/>
</dbReference>
<dbReference type="InterPro" id="IPR010935">
    <property type="entry name" value="SMC_hinge"/>
</dbReference>
<dbReference type="InterPro" id="IPR036277">
    <property type="entry name" value="SMC_hinge_sf"/>
</dbReference>
<dbReference type="InterPro" id="IPR011890">
    <property type="entry name" value="SMC_prok"/>
</dbReference>
<dbReference type="NCBIfam" id="TIGR02169">
    <property type="entry name" value="SMC_prok_A"/>
    <property type="match status" value="1"/>
</dbReference>
<dbReference type="NCBIfam" id="TIGR02168">
    <property type="entry name" value="SMC_prok_B"/>
    <property type="match status" value="1"/>
</dbReference>
<dbReference type="PANTHER" id="PTHR43977">
    <property type="entry name" value="STRUCTURAL MAINTENANCE OF CHROMOSOMES PROTEIN 3"/>
    <property type="match status" value="1"/>
</dbReference>
<dbReference type="Pfam" id="PF06470">
    <property type="entry name" value="SMC_hinge"/>
    <property type="match status" value="1"/>
</dbReference>
<dbReference type="Pfam" id="PF02463">
    <property type="entry name" value="SMC_N"/>
    <property type="match status" value="1"/>
</dbReference>
<dbReference type="PIRSF" id="PIRSF005719">
    <property type="entry name" value="SMC"/>
    <property type="match status" value="1"/>
</dbReference>
<dbReference type="SMART" id="SM00968">
    <property type="entry name" value="SMC_hinge"/>
    <property type="match status" value="1"/>
</dbReference>
<dbReference type="SUPFAM" id="SSF52540">
    <property type="entry name" value="P-loop containing nucleoside triphosphate hydrolases"/>
    <property type="match status" value="1"/>
</dbReference>
<dbReference type="SUPFAM" id="SSF75553">
    <property type="entry name" value="Smc hinge domain"/>
    <property type="match status" value="1"/>
</dbReference>
<dbReference type="SUPFAM" id="SSF57997">
    <property type="entry name" value="Tropomyosin"/>
    <property type="match status" value="1"/>
</dbReference>
<sequence length="1177" mass="135014">MPYIEKLELKGFKSYGNKKVVIPFSKGFTAIVGANGSGKSNIGDAILFVLGGLSAKAMRASRISDLIFAGSKNEPPAKYAEVAIYFNNEDRGFPIDEDEVVIRRRVYPDGRSSYWLNGRRATRSEILDILTAAMISPDGYNIVLQGDITKFIKMSPLERRLLIDDISGIAEYDSKKEKALEELKQAEENLARVDLLIKEVKKQLDKLEKERNDALRYLDLKDKLEKAKVSLLLGEIKILETQIKEGEKRRAEIEEEIQKIEKEIEKIGKEIVEKVKVLREIEERIEKESGEEAIQITKKIGEVTSKIELTKRNIEVAKEELEDAQRRLAKTKEELRKVLSEIEKSKGAITRWKKRRDALINEIKKKEEERNVLVVKLGEIDKTFGAAREEFDSVVKELEETTRKMYEIEGNIRRLQEEKEKLHSRILFLRAKLPGIKEKINEFKAVVEDKRAEISEIEGKLSTIQAKRIKVEKEIEAKSNELEKVSKELESSERELIAAEAQREVRGNRAAEELKRSGIGGIYGTLAELIKVKDEAYALAIEVALGNRADNVVVEDELVAEKAIKYLKEHKLGRLTFLPLNKIKPKHVDSSVGLPAVDVIEYDQKIENAVKFALGDTVIVNSMEEARPHIGKVRMVTIEGELYERSGAITGGHFRARGLAVDTTKLREKVESLRRRKEALEGELNSLKIELRSLENASFELRIKLSDEKKELELASKDLNRLLEEENAVKEEIEESERKIQEIEQKIENEKSELAKLRGRIQRLERKKEKLKKALENPEARELMEKIRIIDGEISSLKEELSRIESRIESLESRLNEELLPRKASLEEEIEGLVNKINALKNNISENEKALELLNKELEKLKSIEENIKGEIRTLREKRKKLEEDISKLREKKEVLQRKLQELEIEANTLKVRDAQLNAQLEEKKYQLTHYDKNLIKSIKEIPLDLEKVKKEIEKMEEEIRSLEPVNMKAIEDFEIVERRYLELKSKREKLEAEKESIIEFINEIEKEKKNVFMRTFEAISRNFSEIFAKLSPGGSARLILENPEDPFSGGLEIEAKPAGKDVKRIEAMSGGEKALTALAFVFAIQKFKPAPFYLFDEIDAHLDDANVKRVADLIKESSKESQFIVITLRDVMMANADKIIGVSMRDGVSKVVSLSLEKAMKILEEIRKKQGWEHGN</sequence>